<sequence length="116" mass="12823">MPDPAHIIAGHKAALSNPHVSEEAKERARKYLKEHGSESHYTTGTTRGQKADADDAGELREEGFGTKNQFEDNESQAKNLGNVRGGYKAAMHNPKVSQKGRRHAKELLEEVDDESK</sequence>
<comment type="subcellular location">
    <subcellularLocation>
        <location evidence="2">Cytoplasm</location>
    </subcellularLocation>
    <subcellularLocation>
        <location evidence="2">Nucleus</location>
    </subcellularLocation>
</comment>
<comment type="similarity">
    <text evidence="3">Belongs to the UPF0654 (con-6) family.</text>
</comment>
<reference key="1">
    <citation type="journal article" date="2002" name="Nature">
        <title>The genome sequence of Schizosaccharomyces pombe.</title>
        <authorList>
            <person name="Wood V."/>
            <person name="Gwilliam R."/>
            <person name="Rajandream M.A."/>
            <person name="Lyne M.H."/>
            <person name="Lyne R."/>
            <person name="Stewart A."/>
            <person name="Sgouros J.G."/>
            <person name="Peat N."/>
            <person name="Hayles J."/>
            <person name="Baker S.G."/>
            <person name="Basham D."/>
            <person name="Bowman S."/>
            <person name="Brooks K."/>
            <person name="Brown D."/>
            <person name="Brown S."/>
            <person name="Chillingworth T."/>
            <person name="Churcher C.M."/>
            <person name="Collins M."/>
            <person name="Connor R."/>
            <person name="Cronin A."/>
            <person name="Davis P."/>
            <person name="Feltwell T."/>
            <person name="Fraser A."/>
            <person name="Gentles S."/>
            <person name="Goble A."/>
            <person name="Hamlin N."/>
            <person name="Harris D.E."/>
            <person name="Hidalgo J."/>
            <person name="Hodgson G."/>
            <person name="Holroyd S."/>
            <person name="Hornsby T."/>
            <person name="Howarth S."/>
            <person name="Huckle E.J."/>
            <person name="Hunt S."/>
            <person name="Jagels K."/>
            <person name="James K.D."/>
            <person name="Jones L."/>
            <person name="Jones M."/>
            <person name="Leather S."/>
            <person name="McDonald S."/>
            <person name="McLean J."/>
            <person name="Mooney P."/>
            <person name="Moule S."/>
            <person name="Mungall K.L."/>
            <person name="Murphy L.D."/>
            <person name="Niblett D."/>
            <person name="Odell C."/>
            <person name="Oliver K."/>
            <person name="O'Neil S."/>
            <person name="Pearson D."/>
            <person name="Quail M.A."/>
            <person name="Rabbinowitsch E."/>
            <person name="Rutherford K.M."/>
            <person name="Rutter S."/>
            <person name="Saunders D."/>
            <person name="Seeger K."/>
            <person name="Sharp S."/>
            <person name="Skelton J."/>
            <person name="Simmonds M.N."/>
            <person name="Squares R."/>
            <person name="Squares S."/>
            <person name="Stevens K."/>
            <person name="Taylor K."/>
            <person name="Taylor R.G."/>
            <person name="Tivey A."/>
            <person name="Walsh S.V."/>
            <person name="Warren T."/>
            <person name="Whitehead S."/>
            <person name="Woodward J.R."/>
            <person name="Volckaert G."/>
            <person name="Aert R."/>
            <person name="Robben J."/>
            <person name="Grymonprez B."/>
            <person name="Weltjens I."/>
            <person name="Vanstreels E."/>
            <person name="Rieger M."/>
            <person name="Schaefer M."/>
            <person name="Mueller-Auer S."/>
            <person name="Gabel C."/>
            <person name="Fuchs M."/>
            <person name="Duesterhoeft A."/>
            <person name="Fritzc C."/>
            <person name="Holzer E."/>
            <person name="Moestl D."/>
            <person name="Hilbert H."/>
            <person name="Borzym K."/>
            <person name="Langer I."/>
            <person name="Beck A."/>
            <person name="Lehrach H."/>
            <person name="Reinhardt R."/>
            <person name="Pohl T.M."/>
            <person name="Eger P."/>
            <person name="Zimmermann W."/>
            <person name="Wedler H."/>
            <person name="Wambutt R."/>
            <person name="Purnelle B."/>
            <person name="Goffeau A."/>
            <person name="Cadieu E."/>
            <person name="Dreano S."/>
            <person name="Gloux S."/>
            <person name="Lelaure V."/>
            <person name="Mottier S."/>
            <person name="Galibert F."/>
            <person name="Aves S.J."/>
            <person name="Xiang Z."/>
            <person name="Hunt C."/>
            <person name="Moore K."/>
            <person name="Hurst S.M."/>
            <person name="Lucas M."/>
            <person name="Rochet M."/>
            <person name="Gaillardin C."/>
            <person name="Tallada V.A."/>
            <person name="Garzon A."/>
            <person name="Thode G."/>
            <person name="Daga R.R."/>
            <person name="Cruzado L."/>
            <person name="Jimenez J."/>
            <person name="Sanchez M."/>
            <person name="del Rey F."/>
            <person name="Benito J."/>
            <person name="Dominguez A."/>
            <person name="Revuelta J.L."/>
            <person name="Moreno S."/>
            <person name="Armstrong J."/>
            <person name="Forsburg S.L."/>
            <person name="Cerutti L."/>
            <person name="Lowe T."/>
            <person name="McCombie W.R."/>
            <person name="Paulsen I."/>
            <person name="Potashkin J."/>
            <person name="Shpakovski G.V."/>
            <person name="Ussery D."/>
            <person name="Barrell B.G."/>
            <person name="Nurse P."/>
        </authorList>
    </citation>
    <scope>NUCLEOTIDE SEQUENCE [LARGE SCALE GENOMIC DNA]</scope>
    <source>
        <strain>972 / ATCC 24843</strain>
    </source>
</reference>
<reference key="2">
    <citation type="journal article" date="2006" name="Nat. Biotechnol.">
        <title>ORFeome cloning and global analysis of protein localization in the fission yeast Schizosaccharomyces pombe.</title>
        <authorList>
            <person name="Matsuyama A."/>
            <person name="Arai R."/>
            <person name="Yashiroda Y."/>
            <person name="Shirai A."/>
            <person name="Kamata A."/>
            <person name="Sekido S."/>
            <person name="Kobayashi Y."/>
            <person name="Hashimoto A."/>
            <person name="Hamamoto M."/>
            <person name="Hiraoka Y."/>
            <person name="Horinouchi S."/>
            <person name="Yoshida M."/>
        </authorList>
    </citation>
    <scope>SUBCELLULAR LOCATION [LARGE SCALE ANALYSIS]</scope>
</reference>
<name>YI09_SCHPO</name>
<feature type="chain" id="PRO_0000350766" description="UPF0654 protein C869.09">
    <location>
        <begin position="1"/>
        <end position="116"/>
    </location>
</feature>
<feature type="region of interest" description="Disordered" evidence="1">
    <location>
        <begin position="32"/>
        <end position="116"/>
    </location>
</feature>
<feature type="compositionally biased region" description="Polar residues" evidence="1">
    <location>
        <begin position="39"/>
        <end position="48"/>
    </location>
</feature>
<feature type="compositionally biased region" description="Basic and acidic residues" evidence="1">
    <location>
        <begin position="49"/>
        <end position="64"/>
    </location>
</feature>
<protein>
    <recommendedName>
        <fullName>UPF0654 protein C869.09</fullName>
    </recommendedName>
</protein>
<dbReference type="EMBL" id="CU329670">
    <property type="protein sequence ID" value="CAB60019.1"/>
    <property type="molecule type" value="Genomic_DNA"/>
</dbReference>
<dbReference type="PIR" id="T39120">
    <property type="entry name" value="T39120"/>
</dbReference>
<dbReference type="RefSeq" id="NP_595010.1">
    <property type="nucleotide sequence ID" value="NM_001020441.2"/>
</dbReference>
<dbReference type="SMR" id="Q9URZ2"/>
<dbReference type="BioGRID" id="279925">
    <property type="interactions" value="1"/>
</dbReference>
<dbReference type="FunCoup" id="Q9URZ2">
    <property type="interactions" value="420"/>
</dbReference>
<dbReference type="STRING" id="284812.Q9URZ2"/>
<dbReference type="PaxDb" id="4896-SPAC869.09.1"/>
<dbReference type="EnsemblFungi" id="SPAC869.09.1">
    <property type="protein sequence ID" value="SPAC869.09.1:pep"/>
    <property type="gene ID" value="SPAC869.09"/>
</dbReference>
<dbReference type="KEGG" id="spo:2543507"/>
<dbReference type="PomBase" id="SPAC869.09"/>
<dbReference type="VEuPathDB" id="FungiDB:SPAC869.09"/>
<dbReference type="eggNOG" id="ENOG502SY5S">
    <property type="taxonomic scope" value="Eukaryota"/>
</dbReference>
<dbReference type="HOGENOM" id="CLU_107705_2_1_1"/>
<dbReference type="InParanoid" id="Q9URZ2"/>
<dbReference type="OMA" id="NQFEDNE"/>
<dbReference type="PhylomeDB" id="Q9URZ2"/>
<dbReference type="PRO" id="PR:Q9URZ2"/>
<dbReference type="Proteomes" id="UP000002485">
    <property type="component" value="Chromosome I"/>
</dbReference>
<dbReference type="GO" id="GO:0005737">
    <property type="term" value="C:cytoplasm"/>
    <property type="evidence" value="ECO:0000318"/>
    <property type="project" value="GO_Central"/>
</dbReference>
<dbReference type="GO" id="GO:0005829">
    <property type="term" value="C:cytosol"/>
    <property type="evidence" value="ECO:0007005"/>
    <property type="project" value="PomBase"/>
</dbReference>
<dbReference type="GO" id="GO:0005634">
    <property type="term" value="C:nucleus"/>
    <property type="evidence" value="ECO:0007005"/>
    <property type="project" value="PomBase"/>
</dbReference>
<dbReference type="InterPro" id="IPR018824">
    <property type="entry name" value="Conidiation-specific_6"/>
</dbReference>
<dbReference type="InterPro" id="IPR052670">
    <property type="entry name" value="UPF0654_domain"/>
</dbReference>
<dbReference type="PANTHER" id="PTHR36576">
    <property type="entry name" value="UPF0654 PROTEIN C11D3.01C-RELATED"/>
    <property type="match status" value="1"/>
</dbReference>
<dbReference type="PANTHER" id="PTHR36576:SF1">
    <property type="entry name" value="UPF0654 PROTEIN C11D3.01C-RELATED"/>
    <property type="match status" value="1"/>
</dbReference>
<dbReference type="Pfam" id="PF10346">
    <property type="entry name" value="Con-6"/>
    <property type="match status" value="2"/>
</dbReference>
<gene>
    <name type="ORF">SPAC869.09</name>
</gene>
<evidence type="ECO:0000256" key="1">
    <source>
        <dbReference type="SAM" id="MobiDB-lite"/>
    </source>
</evidence>
<evidence type="ECO:0000269" key="2">
    <source>
    </source>
</evidence>
<evidence type="ECO:0000305" key="3"/>
<keyword id="KW-0963">Cytoplasm</keyword>
<keyword id="KW-0539">Nucleus</keyword>
<keyword id="KW-1185">Reference proteome</keyword>
<organism>
    <name type="scientific">Schizosaccharomyces pombe (strain 972 / ATCC 24843)</name>
    <name type="common">Fission yeast</name>
    <dbReference type="NCBI Taxonomy" id="284812"/>
    <lineage>
        <taxon>Eukaryota</taxon>
        <taxon>Fungi</taxon>
        <taxon>Dikarya</taxon>
        <taxon>Ascomycota</taxon>
        <taxon>Taphrinomycotina</taxon>
        <taxon>Schizosaccharomycetes</taxon>
        <taxon>Schizosaccharomycetales</taxon>
        <taxon>Schizosaccharomycetaceae</taxon>
        <taxon>Schizosaccharomyces</taxon>
    </lineage>
</organism>
<proteinExistence type="inferred from homology"/>
<accession>Q9URZ2</accession>